<sequence length="441" mass="49051">MKFSITLALCFTLSIFLIGSQAKVPVDDQFRVVNEGGYTDYSPIEYNPDVRGFVPFSDNFRLCFYNTTPNAYTLALRIGNRVQESTLRWVWEANRGSPVKENATLTFGEDGNLVLAEADGRLVWQTNTANKGAVGIKILENGNMVIYDSSGKFVWQSFDSPTDTLLVGQSLKLNGRTKLVSRLSPSVNTNGPYSLVMEAKKLVLYYTTNKTPKPIAYFEYEFFTKITQFQSMTFQAVEDSDTTWGLVMEGVDSGSKFNVSTFLSRPKHNATLSFIRLESDGNIRVWSYSTLATSTAWDVTYTAFTNADTDGNDECRIPEHCLGFGLCKKGQCNACPSDKGLLGWDETCKSPSLASCDPKTFHYFKIEGADSFMTKYNGGSSTTESACGDKCTRDCKCLGFFYNRKSSRCWLGYELKTLTRTGDSSLVAYVKAPNANKKSTL</sequence>
<feature type="signal peptide" evidence="1">
    <location>
        <begin position="1"/>
        <end position="22"/>
    </location>
</feature>
<feature type="chain" id="PRO_5009974827" description="EP1-like glycoprotein 3" evidence="1">
    <location>
        <begin position="23"/>
        <end position="441"/>
    </location>
</feature>
<feature type="domain" description="Bulb-type lectin" evidence="2">
    <location>
        <begin position="29"/>
        <end position="159"/>
    </location>
</feature>
<feature type="repeat" description="WD" evidence="1">
    <location>
        <begin position="254"/>
        <end position="296"/>
    </location>
</feature>
<feature type="domain" description="PAN" evidence="3">
    <location>
        <begin position="356"/>
        <end position="433"/>
    </location>
</feature>
<feature type="glycosylation site" description="N-linked (GlcNAc...) asparagine" evidence="4">
    <location>
        <position position="102"/>
    </location>
</feature>
<feature type="glycosylation site" description="N-linked (GlcNAc...) asparagine" evidence="4">
    <location>
        <position position="258"/>
    </location>
</feature>
<feature type="glycosylation site" description="N-linked (GlcNAc...) asparagine" evidence="4">
    <location>
        <position position="269"/>
    </location>
</feature>
<feature type="disulfide bond" evidence="3">
    <location>
        <begin position="387"/>
        <end position="409"/>
    </location>
</feature>
<feature type="disulfide bond" evidence="3">
    <location>
        <begin position="391"/>
        <end position="397"/>
    </location>
</feature>
<feature type="sequence conflict" description="In Ref. 3; AAN31898." evidence="11" ref="3">
    <original>A</original>
    <variation>T</variation>
    <location>
        <position position="432"/>
    </location>
</feature>
<proteinExistence type="evidence at protein level"/>
<reference key="1">
    <citation type="journal article" date="2000" name="Nature">
        <title>Sequence and analysis of chromosome 1 of the plant Arabidopsis thaliana.</title>
        <authorList>
            <person name="Theologis A."/>
            <person name="Ecker J.R."/>
            <person name="Palm C.J."/>
            <person name="Federspiel N.A."/>
            <person name="Kaul S."/>
            <person name="White O."/>
            <person name="Alonso J."/>
            <person name="Altafi H."/>
            <person name="Araujo R."/>
            <person name="Bowman C.L."/>
            <person name="Brooks S.Y."/>
            <person name="Buehler E."/>
            <person name="Chan A."/>
            <person name="Chao Q."/>
            <person name="Chen H."/>
            <person name="Cheuk R.F."/>
            <person name="Chin C.W."/>
            <person name="Chung M.K."/>
            <person name="Conn L."/>
            <person name="Conway A.B."/>
            <person name="Conway A.R."/>
            <person name="Creasy T.H."/>
            <person name="Dewar K."/>
            <person name="Dunn P."/>
            <person name="Etgu P."/>
            <person name="Feldblyum T.V."/>
            <person name="Feng J.-D."/>
            <person name="Fong B."/>
            <person name="Fujii C.Y."/>
            <person name="Gill J.E."/>
            <person name="Goldsmith A.D."/>
            <person name="Haas B."/>
            <person name="Hansen N.F."/>
            <person name="Hughes B."/>
            <person name="Huizar L."/>
            <person name="Hunter J.L."/>
            <person name="Jenkins J."/>
            <person name="Johnson-Hopson C."/>
            <person name="Khan S."/>
            <person name="Khaykin E."/>
            <person name="Kim C.J."/>
            <person name="Koo H.L."/>
            <person name="Kremenetskaia I."/>
            <person name="Kurtz D.B."/>
            <person name="Kwan A."/>
            <person name="Lam B."/>
            <person name="Langin-Hooper S."/>
            <person name="Lee A."/>
            <person name="Lee J.M."/>
            <person name="Lenz C.A."/>
            <person name="Li J.H."/>
            <person name="Li Y.-P."/>
            <person name="Lin X."/>
            <person name="Liu S.X."/>
            <person name="Liu Z.A."/>
            <person name="Luros J.S."/>
            <person name="Maiti R."/>
            <person name="Marziali A."/>
            <person name="Militscher J."/>
            <person name="Miranda M."/>
            <person name="Nguyen M."/>
            <person name="Nierman W.C."/>
            <person name="Osborne B.I."/>
            <person name="Pai G."/>
            <person name="Peterson J."/>
            <person name="Pham P.K."/>
            <person name="Rizzo M."/>
            <person name="Rooney T."/>
            <person name="Rowley D."/>
            <person name="Sakano H."/>
            <person name="Salzberg S.L."/>
            <person name="Schwartz J.R."/>
            <person name="Shinn P."/>
            <person name="Southwick A.M."/>
            <person name="Sun H."/>
            <person name="Tallon L.J."/>
            <person name="Tambunga G."/>
            <person name="Toriumi M.J."/>
            <person name="Town C.D."/>
            <person name="Utterback T."/>
            <person name="Van Aken S."/>
            <person name="Vaysberg M."/>
            <person name="Vysotskaia V.S."/>
            <person name="Walker M."/>
            <person name="Wu D."/>
            <person name="Yu G."/>
            <person name="Fraser C.M."/>
            <person name="Venter J.C."/>
            <person name="Davis R.W."/>
        </authorList>
    </citation>
    <scope>NUCLEOTIDE SEQUENCE [LARGE SCALE GENOMIC DNA]</scope>
    <source>
        <strain>cv. Columbia</strain>
    </source>
</reference>
<reference key="2">
    <citation type="journal article" date="2017" name="Plant J.">
        <title>Araport11: a complete reannotation of the Arabidopsis thaliana reference genome.</title>
        <authorList>
            <person name="Cheng C.Y."/>
            <person name="Krishnakumar V."/>
            <person name="Chan A.P."/>
            <person name="Thibaud-Nissen F."/>
            <person name="Schobel S."/>
            <person name="Town C.D."/>
        </authorList>
    </citation>
    <scope>GENOME REANNOTATION</scope>
    <source>
        <strain>cv. Columbia</strain>
    </source>
</reference>
<reference key="3">
    <citation type="journal article" date="2003" name="Science">
        <title>Empirical analysis of transcriptional activity in the Arabidopsis genome.</title>
        <authorList>
            <person name="Yamada K."/>
            <person name="Lim J."/>
            <person name="Dale J.M."/>
            <person name="Chen H."/>
            <person name="Shinn P."/>
            <person name="Palm C.J."/>
            <person name="Southwick A.M."/>
            <person name="Wu H.C."/>
            <person name="Kim C.J."/>
            <person name="Nguyen M."/>
            <person name="Pham P.K."/>
            <person name="Cheuk R.F."/>
            <person name="Karlin-Newmann G."/>
            <person name="Liu S.X."/>
            <person name="Lam B."/>
            <person name="Sakano H."/>
            <person name="Wu T."/>
            <person name="Yu G."/>
            <person name="Miranda M."/>
            <person name="Quach H.L."/>
            <person name="Tripp M."/>
            <person name="Chang C.H."/>
            <person name="Lee J.M."/>
            <person name="Toriumi M.J."/>
            <person name="Chan M.M."/>
            <person name="Tang C.C."/>
            <person name="Onodera C.S."/>
            <person name="Deng J.M."/>
            <person name="Akiyama K."/>
            <person name="Ansari Y."/>
            <person name="Arakawa T."/>
            <person name="Banh J."/>
            <person name="Banno F."/>
            <person name="Bowser L."/>
            <person name="Brooks S.Y."/>
            <person name="Carninci P."/>
            <person name="Chao Q."/>
            <person name="Choy N."/>
            <person name="Enju A."/>
            <person name="Goldsmith A.D."/>
            <person name="Gurjal M."/>
            <person name="Hansen N.F."/>
            <person name="Hayashizaki Y."/>
            <person name="Johnson-Hopson C."/>
            <person name="Hsuan V.W."/>
            <person name="Iida K."/>
            <person name="Karnes M."/>
            <person name="Khan S."/>
            <person name="Koesema E."/>
            <person name="Ishida J."/>
            <person name="Jiang P.X."/>
            <person name="Jones T."/>
            <person name="Kawai J."/>
            <person name="Kamiya A."/>
            <person name="Meyers C."/>
            <person name="Nakajima M."/>
            <person name="Narusaka M."/>
            <person name="Seki M."/>
            <person name="Sakurai T."/>
            <person name="Satou M."/>
            <person name="Tamse R."/>
            <person name="Vaysberg M."/>
            <person name="Wallender E.K."/>
            <person name="Wong C."/>
            <person name="Yamamura Y."/>
            <person name="Yuan S."/>
            <person name="Shinozaki K."/>
            <person name="Davis R.W."/>
            <person name="Theologis A."/>
            <person name="Ecker J.R."/>
        </authorList>
    </citation>
    <scope>NUCLEOTIDE SEQUENCE [LARGE SCALE MRNA]</scope>
    <source>
        <strain>cv. Columbia</strain>
    </source>
</reference>
<reference key="4">
    <citation type="journal article" date="2003" name="Proteomics">
        <title>Proteomic analysis of changes in the extracellular matrix of Arabidopsis cell suspension cultures induced by fungal elicitors.</title>
        <authorList>
            <person name="Ndimba B.K."/>
            <person name="Chivasa S."/>
            <person name="Hamilton J.M."/>
            <person name="Simon W.J."/>
            <person name="Slabas A.R."/>
        </authorList>
    </citation>
    <scope>INDUCTION BY FUNGAL ELICITOR</scope>
    <scope>IDENTIFICATION BY MASS SPECTROMETRY</scope>
    <scope>SUBCELLULAR LOCATION</scope>
    <scope>PHOSPHORYLATION</scope>
</reference>
<reference key="5">
    <citation type="journal article" date="2004" name="Phytochemistry">
        <title>A proteomic analysis of plant programmed cell death.</title>
        <authorList>
            <person name="Swidzinski J.A."/>
            <person name="Leaver C.J."/>
            <person name="Sweetlove L.J."/>
        </authorList>
    </citation>
    <scope>FUNCTION</scope>
    <scope>IDENTIFICATION BY MASS SPECTROMETRY</scope>
    <scope>INDUCTION BY PROGRAMMED CELL DEATH</scope>
</reference>
<reference key="6">
    <citation type="journal article" date="2008" name="BMC Plant Biol.">
        <title>A new picture of cell wall protein dynamics in elongating cells of Arabidopsis thaliana: confirmed actors and newcomers.</title>
        <authorList>
            <person name="Irshad M."/>
            <person name="Canut H."/>
            <person name="Borderies G."/>
            <person name="Pont-Lezica R."/>
            <person name="Jamet E."/>
        </authorList>
    </citation>
    <scope>SUBCELLULAR LOCATION</scope>
</reference>
<reference key="7">
    <citation type="journal article" date="2013" name="Plant J.">
        <title>An in vivo expression system for the identification of cargo proteins of vacuolar sorting receptors in Arabidopsis culture cells.</title>
        <authorList>
            <person name="Shen J."/>
            <person name="Suen P.K."/>
            <person name="Wang X."/>
            <person name="Lin Y."/>
            <person name="Lo S.W."/>
            <person name="Rojo E."/>
            <person name="Jiang L."/>
        </authorList>
    </citation>
    <scope>CAUTION</scope>
</reference>
<accession>Q9ZVA4</accession>
<accession>Q8H153</accession>
<dbReference type="EMBL" id="AC005679">
    <property type="protein sequence ID" value="AAC83025.1"/>
    <property type="molecule type" value="Genomic_DNA"/>
</dbReference>
<dbReference type="EMBL" id="CP002684">
    <property type="protein sequence ID" value="AEE36162.1"/>
    <property type="molecule type" value="Genomic_DNA"/>
</dbReference>
<dbReference type="EMBL" id="AY054501">
    <property type="protein sequence ID" value="AAK96692.1"/>
    <property type="molecule type" value="mRNA"/>
</dbReference>
<dbReference type="EMBL" id="BT000758">
    <property type="protein sequence ID" value="AAN31898.1"/>
    <property type="molecule type" value="mRNA"/>
</dbReference>
<dbReference type="PIR" id="H96817">
    <property type="entry name" value="H96817"/>
</dbReference>
<dbReference type="RefSeq" id="NP_178006.1">
    <property type="nucleotide sequence ID" value="NM_106533.3"/>
</dbReference>
<dbReference type="SMR" id="Q9ZVA4"/>
<dbReference type="FunCoup" id="Q9ZVA4">
    <property type="interactions" value="146"/>
</dbReference>
<dbReference type="IntAct" id="Q9ZVA4">
    <property type="interactions" value="1"/>
</dbReference>
<dbReference type="STRING" id="3702.Q9ZVA4"/>
<dbReference type="GlyGen" id="Q9ZVA4">
    <property type="glycosylation" value="3 sites"/>
</dbReference>
<dbReference type="iPTMnet" id="Q9ZVA4"/>
<dbReference type="MetOSite" id="Q9ZVA4"/>
<dbReference type="SwissPalm" id="Q9ZVA4"/>
<dbReference type="PaxDb" id="3702-AT1G78850.1"/>
<dbReference type="ProteomicsDB" id="222324"/>
<dbReference type="EnsemblPlants" id="AT1G78850.1">
    <property type="protein sequence ID" value="AT1G78850.1"/>
    <property type="gene ID" value="AT1G78850"/>
</dbReference>
<dbReference type="GeneID" id="844222"/>
<dbReference type="Gramene" id="AT1G78850.1">
    <property type="protein sequence ID" value="AT1G78850.1"/>
    <property type="gene ID" value="AT1G78850"/>
</dbReference>
<dbReference type="KEGG" id="ath:AT1G78850"/>
<dbReference type="Araport" id="AT1G78850"/>
<dbReference type="TAIR" id="AT1G78850">
    <property type="gene designation" value="MBL1"/>
</dbReference>
<dbReference type="eggNOG" id="ENOG502QWJD">
    <property type="taxonomic scope" value="Eukaryota"/>
</dbReference>
<dbReference type="HOGENOM" id="CLU_043351_0_0_1"/>
<dbReference type="InParanoid" id="Q9ZVA4"/>
<dbReference type="OMA" id="GNIKFHT"/>
<dbReference type="OrthoDB" id="1884773at2759"/>
<dbReference type="PhylomeDB" id="Q9ZVA4"/>
<dbReference type="CD-CODE" id="4299E36E">
    <property type="entry name" value="Nucleolus"/>
</dbReference>
<dbReference type="PRO" id="PR:Q9ZVA4"/>
<dbReference type="Proteomes" id="UP000006548">
    <property type="component" value="Chromosome 1"/>
</dbReference>
<dbReference type="ExpressionAtlas" id="Q9ZVA4">
    <property type="expression patterns" value="baseline and differential"/>
</dbReference>
<dbReference type="GO" id="GO:0048046">
    <property type="term" value="C:apoplast"/>
    <property type="evidence" value="ECO:0007005"/>
    <property type="project" value="TAIR"/>
</dbReference>
<dbReference type="GO" id="GO:0005794">
    <property type="term" value="C:Golgi apparatus"/>
    <property type="evidence" value="ECO:0007005"/>
    <property type="project" value="TAIR"/>
</dbReference>
<dbReference type="GO" id="GO:0005739">
    <property type="term" value="C:mitochondrion"/>
    <property type="evidence" value="ECO:0007005"/>
    <property type="project" value="TAIR"/>
</dbReference>
<dbReference type="GO" id="GO:0000325">
    <property type="term" value="C:plant-type vacuole"/>
    <property type="evidence" value="ECO:0007005"/>
    <property type="project" value="TAIR"/>
</dbReference>
<dbReference type="GO" id="GO:0099503">
    <property type="term" value="C:secretory vesicle"/>
    <property type="evidence" value="ECO:0007005"/>
    <property type="project" value="TAIR"/>
</dbReference>
<dbReference type="GO" id="GO:0030246">
    <property type="term" value="F:carbohydrate binding"/>
    <property type="evidence" value="ECO:0007669"/>
    <property type="project" value="UniProtKB-KW"/>
</dbReference>
<dbReference type="GO" id="GO:0005539">
    <property type="term" value="F:glycosaminoglycan binding"/>
    <property type="evidence" value="ECO:0000353"/>
    <property type="project" value="TAIR"/>
</dbReference>
<dbReference type="GO" id="GO:0071456">
    <property type="term" value="P:cellular response to hypoxia"/>
    <property type="evidence" value="ECO:0007007"/>
    <property type="project" value="TAIR"/>
</dbReference>
<dbReference type="GO" id="GO:1904383">
    <property type="term" value="P:response to sodium phosphate"/>
    <property type="evidence" value="ECO:0000270"/>
    <property type="project" value="TAIR"/>
</dbReference>
<dbReference type="CDD" id="cd00028">
    <property type="entry name" value="B_lectin"/>
    <property type="match status" value="1"/>
</dbReference>
<dbReference type="CDD" id="cd01098">
    <property type="entry name" value="PAN_AP_plant"/>
    <property type="match status" value="1"/>
</dbReference>
<dbReference type="FunFam" id="2.90.10.10:FF:000018">
    <property type="entry name" value="EP1-like glycoprotein 2"/>
    <property type="match status" value="1"/>
</dbReference>
<dbReference type="Gene3D" id="2.90.10.10">
    <property type="entry name" value="Bulb-type lectin domain"/>
    <property type="match status" value="1"/>
</dbReference>
<dbReference type="InterPro" id="IPR001480">
    <property type="entry name" value="Bulb-type_lectin_dom"/>
</dbReference>
<dbReference type="InterPro" id="IPR036426">
    <property type="entry name" value="Bulb-type_lectin_dom_sf"/>
</dbReference>
<dbReference type="InterPro" id="IPR051343">
    <property type="entry name" value="G-type_lectin_kinases/EP1-like"/>
</dbReference>
<dbReference type="InterPro" id="IPR003609">
    <property type="entry name" value="Pan_app"/>
</dbReference>
<dbReference type="InterPro" id="IPR035446">
    <property type="entry name" value="SLSG/EP1"/>
</dbReference>
<dbReference type="PANTHER" id="PTHR47976">
    <property type="entry name" value="G-TYPE LECTIN S-RECEPTOR-LIKE SERINE/THREONINE-PROTEIN KINASE SD2-5"/>
    <property type="match status" value="1"/>
</dbReference>
<dbReference type="PANTHER" id="PTHR47976:SF115">
    <property type="entry name" value="RECEPTOR-LIKE SERINE_THREONINE-PROTEIN KINASE"/>
    <property type="match status" value="1"/>
</dbReference>
<dbReference type="Pfam" id="PF01453">
    <property type="entry name" value="B_lectin"/>
    <property type="match status" value="1"/>
</dbReference>
<dbReference type="PIRSF" id="PIRSF002686">
    <property type="entry name" value="SLG"/>
    <property type="match status" value="1"/>
</dbReference>
<dbReference type="SMART" id="SM00108">
    <property type="entry name" value="B_lectin"/>
    <property type="match status" value="1"/>
</dbReference>
<dbReference type="SUPFAM" id="SSF51110">
    <property type="entry name" value="alpha-D-mannose-specific plant lectins"/>
    <property type="match status" value="1"/>
</dbReference>
<dbReference type="PROSITE" id="PS50927">
    <property type="entry name" value="BULB_LECTIN"/>
    <property type="match status" value="1"/>
</dbReference>
<dbReference type="PROSITE" id="PS50948">
    <property type="entry name" value="PAN"/>
    <property type="match status" value="1"/>
</dbReference>
<comment type="function">
    <text evidence="9">May be involved in a cell-to cell programmed cell death (PCD) signaling mechanism.</text>
</comment>
<comment type="subcellular location">
    <subcellularLocation>
        <location evidence="5 7">Secreted</location>
        <location evidence="5 7">Cell wall</location>
    </subcellularLocation>
</comment>
<comment type="induction">
    <text evidence="5 6">Up-regulated by fungal elicitor (PubMed:12833529). Up-regulated in both heat- and senescence-induced programmed cell death (PCD) (PubMed:15276441).</text>
</comment>
<comment type="PTM">
    <text evidence="5">Phosphorylated on tyrosine.</text>
</comment>
<comment type="caution">
    <text evidence="12">Identified as a cargo protein of vacuolar sorting receptors (PubMed:23738689). This was based on interactions with truncated vacuolar sorting receptors and their co-secretion in the culture medium (PubMed:23738689). This function is however not supported by recent evidences.</text>
</comment>
<protein>
    <recommendedName>
        <fullName evidence="9">EP1-like glycoprotein 3</fullName>
    </recommendedName>
    <alternativeName>
        <fullName evidence="10">Curculin-like (Mannose-binding) lectin family protein</fullName>
    </alternativeName>
    <alternativeName>
        <fullName evidence="8">Putative receptor-like protein kinase-like protein</fullName>
    </alternativeName>
</protein>
<keyword id="KW-0134">Cell wall</keyword>
<keyword id="KW-1015">Disulfide bond</keyword>
<keyword id="KW-0325">Glycoprotein</keyword>
<keyword id="KW-0430">Lectin</keyword>
<keyword id="KW-0597">Phosphoprotein</keyword>
<keyword id="KW-1185">Reference proteome</keyword>
<keyword id="KW-0964">Secreted</keyword>
<keyword id="KW-0732">Signal</keyword>
<keyword id="KW-0853">WD repeat</keyword>
<gene>
    <name evidence="13" type="ordered locus">At1g78850</name>
    <name evidence="14" type="ORF">F9K20.10</name>
</gene>
<evidence type="ECO:0000255" key="1"/>
<evidence type="ECO:0000255" key="2">
    <source>
        <dbReference type="PROSITE-ProRule" id="PRU00038"/>
    </source>
</evidence>
<evidence type="ECO:0000255" key="3">
    <source>
        <dbReference type="PROSITE-ProRule" id="PRU00315"/>
    </source>
</evidence>
<evidence type="ECO:0000255" key="4">
    <source>
        <dbReference type="PROSITE-ProRule" id="PRU00498"/>
    </source>
</evidence>
<evidence type="ECO:0000269" key="5">
    <source>
    </source>
</evidence>
<evidence type="ECO:0000269" key="6">
    <source>
    </source>
</evidence>
<evidence type="ECO:0000269" key="7">
    <source>
    </source>
</evidence>
<evidence type="ECO:0000303" key="8">
    <source>
    </source>
</evidence>
<evidence type="ECO:0000303" key="9">
    <source>
    </source>
</evidence>
<evidence type="ECO:0000303" key="10">
    <source>
    </source>
</evidence>
<evidence type="ECO:0000305" key="11"/>
<evidence type="ECO:0000305" key="12">
    <source>
    </source>
</evidence>
<evidence type="ECO:0000312" key="13">
    <source>
        <dbReference type="Araport" id="AT1G78850"/>
    </source>
</evidence>
<evidence type="ECO:0000312" key="14">
    <source>
        <dbReference type="EMBL" id="AAC83025.1"/>
    </source>
</evidence>
<organism>
    <name type="scientific">Arabidopsis thaliana</name>
    <name type="common">Mouse-ear cress</name>
    <dbReference type="NCBI Taxonomy" id="3702"/>
    <lineage>
        <taxon>Eukaryota</taxon>
        <taxon>Viridiplantae</taxon>
        <taxon>Streptophyta</taxon>
        <taxon>Embryophyta</taxon>
        <taxon>Tracheophyta</taxon>
        <taxon>Spermatophyta</taxon>
        <taxon>Magnoliopsida</taxon>
        <taxon>eudicotyledons</taxon>
        <taxon>Gunneridae</taxon>
        <taxon>Pentapetalae</taxon>
        <taxon>rosids</taxon>
        <taxon>malvids</taxon>
        <taxon>Brassicales</taxon>
        <taxon>Brassicaceae</taxon>
        <taxon>Camelineae</taxon>
        <taxon>Arabidopsis</taxon>
    </lineage>
</organism>
<name>EP1L3_ARATH</name>